<proteinExistence type="evidence at protein level"/>
<dbReference type="EMBL" id="AF216967">
    <property type="protein sequence ID" value="AAO13250.1"/>
    <property type="status" value="ALT_SEQ"/>
    <property type="molecule type" value="mRNA"/>
</dbReference>
<dbReference type="EMBL" id="AB183546">
    <property type="protein sequence ID" value="BAD27571.1"/>
    <property type="molecule type" value="mRNA"/>
</dbReference>
<dbReference type="EMBL" id="AB183547">
    <property type="protein sequence ID" value="BAD27572.1"/>
    <property type="molecule type" value="mRNA"/>
</dbReference>
<dbReference type="EMBL" id="AB183548">
    <property type="protein sequence ID" value="BAD27573.1"/>
    <property type="molecule type" value="mRNA"/>
</dbReference>
<dbReference type="EMBL" id="AB183549">
    <property type="protein sequence ID" value="BAD27574.1"/>
    <property type="molecule type" value="mRNA"/>
</dbReference>
<dbReference type="EMBL" id="BX640971">
    <property type="protein sequence ID" value="CAE45986.1"/>
    <property type="molecule type" value="mRNA"/>
</dbReference>
<dbReference type="EMBL" id="BX640873">
    <property type="protein sequence ID" value="CAE45930.1"/>
    <property type="status" value="ALT_INIT"/>
    <property type="molecule type" value="mRNA"/>
</dbReference>
<dbReference type="EMBL" id="AL033377">
    <property type="status" value="NOT_ANNOTATED_CDS"/>
    <property type="molecule type" value="Genomic_DNA"/>
</dbReference>
<dbReference type="EMBL" id="AL360007">
    <property type="status" value="NOT_ANNOTATED_CDS"/>
    <property type="molecule type" value="Genomic_DNA"/>
</dbReference>
<dbReference type="EMBL" id="BC075798">
    <property type="protein sequence ID" value="AAH75798.1"/>
    <property type="molecule type" value="mRNA"/>
</dbReference>
<dbReference type="EMBL" id="AK027843">
    <property type="protein sequence ID" value="BAB55406.1"/>
    <property type="status" value="ALT_INIT"/>
    <property type="molecule type" value="mRNA"/>
</dbReference>
<dbReference type="EMBL" id="AK075087">
    <property type="protein sequence ID" value="BAC11393.1"/>
    <property type="status" value="ALT_INIT"/>
    <property type="molecule type" value="mRNA"/>
</dbReference>
<dbReference type="EMBL" id="AY181244">
    <property type="protein sequence ID" value="AAO27356.1"/>
    <property type="molecule type" value="mRNA"/>
</dbReference>
<dbReference type="EMBL" id="AY426673">
    <property type="protein sequence ID" value="AAR88427.1"/>
    <property type="molecule type" value="mRNA"/>
</dbReference>
<dbReference type="CCDS" id="CCDS47489.1">
    <molecule id="Q86SQ4-3"/>
</dbReference>
<dbReference type="CCDS" id="CCDS47490.1">
    <molecule id="Q86SQ4-1"/>
</dbReference>
<dbReference type="CCDS" id="CCDS47491.1">
    <molecule id="Q86SQ4-2"/>
</dbReference>
<dbReference type="CCDS" id="CCDS55064.1">
    <molecule id="Q86SQ4-4"/>
</dbReference>
<dbReference type="RefSeq" id="NP_001027566.2">
    <molecule id="Q86SQ4-2"/>
    <property type="nucleotide sequence ID" value="NM_001032394.3"/>
</dbReference>
<dbReference type="RefSeq" id="NP_001027567.2">
    <molecule id="Q86SQ4-4"/>
    <property type="nucleotide sequence ID" value="NM_001032395.3"/>
</dbReference>
<dbReference type="RefSeq" id="NP_065188.4">
    <molecule id="Q86SQ4-1"/>
    <property type="nucleotide sequence ID" value="NM_020455.5"/>
</dbReference>
<dbReference type="RefSeq" id="NP_940971.2">
    <molecule id="Q86SQ4-3"/>
    <property type="nucleotide sequence ID" value="NM_198569.3"/>
</dbReference>
<dbReference type="SASBDB" id="Q86SQ4"/>
<dbReference type="SMR" id="Q86SQ4"/>
<dbReference type="BioGRID" id="121449">
    <property type="interactions" value="112"/>
</dbReference>
<dbReference type="FunCoup" id="Q86SQ4">
    <property type="interactions" value="629"/>
</dbReference>
<dbReference type="IntAct" id="Q86SQ4">
    <property type="interactions" value="25"/>
</dbReference>
<dbReference type="STRING" id="9606.ENSP00000356581"/>
<dbReference type="ChEMBL" id="CHEMBL4523884"/>
<dbReference type="MEROPS" id="P02.017"/>
<dbReference type="GlyConnect" id="1287">
    <property type="glycosylation" value="19 N-Linked glycans (8 sites)"/>
</dbReference>
<dbReference type="GlyCosmos" id="Q86SQ4">
    <property type="glycosylation" value="26 sites, 19 glycans"/>
</dbReference>
<dbReference type="GlyGen" id="Q86SQ4">
    <property type="glycosylation" value="26 sites, 37 N-linked glycans (12 sites)"/>
</dbReference>
<dbReference type="iPTMnet" id="Q86SQ4"/>
<dbReference type="PhosphoSitePlus" id="Q86SQ4"/>
<dbReference type="SwissPalm" id="Q86SQ4"/>
<dbReference type="BioMuta" id="ADGRG6"/>
<dbReference type="DMDM" id="215274152"/>
<dbReference type="jPOST" id="Q86SQ4"/>
<dbReference type="MassIVE" id="Q86SQ4"/>
<dbReference type="PaxDb" id="9606-ENSP00000356581"/>
<dbReference type="PeptideAtlas" id="Q86SQ4"/>
<dbReference type="ProteomicsDB" id="69609">
    <molecule id="Q86SQ4-1"/>
</dbReference>
<dbReference type="ProteomicsDB" id="69610">
    <molecule id="Q86SQ4-2"/>
</dbReference>
<dbReference type="ProteomicsDB" id="69611">
    <molecule id="Q86SQ4-3"/>
</dbReference>
<dbReference type="ProteomicsDB" id="69612">
    <molecule id="Q86SQ4-4"/>
</dbReference>
<dbReference type="Antibodypedia" id="1571">
    <property type="antibodies" value="210 antibodies from 28 providers"/>
</dbReference>
<dbReference type="DNASU" id="57211"/>
<dbReference type="Ensembl" id="ENST00000230173.10">
    <molecule id="Q86SQ4-1"/>
    <property type="protein sequence ID" value="ENSP00000230173.6"/>
    <property type="gene ID" value="ENSG00000112414.15"/>
</dbReference>
<dbReference type="Ensembl" id="ENST00000296932.13">
    <molecule id="Q86SQ4-2"/>
    <property type="protein sequence ID" value="ENSP00000296932.8"/>
    <property type="gene ID" value="ENSG00000112414.15"/>
</dbReference>
<dbReference type="Ensembl" id="ENST00000367608.6">
    <molecule id="Q86SQ4-4"/>
    <property type="protein sequence ID" value="ENSP00000356580.2"/>
    <property type="gene ID" value="ENSG00000112414.15"/>
</dbReference>
<dbReference type="Ensembl" id="ENST00000367609.8">
    <molecule id="Q86SQ4-3"/>
    <property type="protein sequence ID" value="ENSP00000356581.3"/>
    <property type="gene ID" value="ENSG00000112414.15"/>
</dbReference>
<dbReference type="GeneID" id="57211"/>
<dbReference type="KEGG" id="hsa:57211"/>
<dbReference type="MANE-Select" id="ENST00000367609.8">
    <molecule id="Q86SQ4-3"/>
    <property type="protein sequence ID" value="ENSP00000356581.3"/>
    <property type="RefSeq nucleotide sequence ID" value="NM_198569.3"/>
    <property type="RefSeq protein sequence ID" value="NP_940971.2"/>
</dbReference>
<dbReference type="UCSC" id="uc010khc.4">
    <molecule id="Q86SQ4-1"/>
    <property type="organism name" value="human"/>
</dbReference>
<dbReference type="AGR" id="HGNC:13841"/>
<dbReference type="CTD" id="57211"/>
<dbReference type="DisGeNET" id="57211"/>
<dbReference type="GeneCards" id="ADGRG6"/>
<dbReference type="HGNC" id="HGNC:13841">
    <property type="gene designation" value="ADGRG6"/>
</dbReference>
<dbReference type="HPA" id="ENSG00000112414">
    <property type="expression patterns" value="Tissue enhanced (liver, placenta)"/>
</dbReference>
<dbReference type="MalaCards" id="ADGRG6"/>
<dbReference type="MIM" id="606255">
    <property type="type" value="phenotype"/>
</dbReference>
<dbReference type="MIM" id="612243">
    <property type="type" value="gene"/>
</dbReference>
<dbReference type="MIM" id="616503">
    <property type="type" value="phenotype"/>
</dbReference>
<dbReference type="neXtProt" id="NX_Q86SQ4"/>
<dbReference type="OpenTargets" id="ENSG00000112414"/>
<dbReference type="PharmGKB" id="PA134878328"/>
<dbReference type="VEuPathDB" id="HostDB:ENSG00000112414"/>
<dbReference type="eggNOG" id="KOG4193">
    <property type="taxonomic scope" value="Eukaryota"/>
</dbReference>
<dbReference type="GeneTree" id="ENSGT00940000155621"/>
<dbReference type="HOGENOM" id="CLU_002753_3_3_1"/>
<dbReference type="InParanoid" id="Q86SQ4"/>
<dbReference type="OMA" id="AVHHPIC"/>
<dbReference type="OrthoDB" id="10037534at2759"/>
<dbReference type="PAN-GO" id="Q86SQ4">
    <property type="GO annotations" value="6 GO annotations based on evolutionary models"/>
</dbReference>
<dbReference type="PhylomeDB" id="Q86SQ4"/>
<dbReference type="TreeFam" id="TF321769"/>
<dbReference type="PathwayCommons" id="Q86SQ4"/>
<dbReference type="Reactome" id="R-HSA-9619665">
    <property type="pathway name" value="EGR2 and SOX10-mediated initiation of Schwann cell myelination"/>
</dbReference>
<dbReference type="SignaLink" id="Q86SQ4"/>
<dbReference type="BioGRID-ORCS" id="57211">
    <property type="hits" value="11 hits in 1152 CRISPR screens"/>
</dbReference>
<dbReference type="ChiTaRS" id="ADGRG6">
    <property type="organism name" value="human"/>
</dbReference>
<dbReference type="GeneWiki" id="GPR126"/>
<dbReference type="GenomeRNAi" id="57211"/>
<dbReference type="Pharos" id="Q86SQ4">
    <property type="development level" value="Tbio"/>
</dbReference>
<dbReference type="PRO" id="PR:Q86SQ4"/>
<dbReference type="Proteomes" id="UP000005640">
    <property type="component" value="Chromosome 6"/>
</dbReference>
<dbReference type="RNAct" id="Q86SQ4">
    <property type="molecule type" value="protein"/>
</dbReference>
<dbReference type="Bgee" id="ENSG00000112414">
    <property type="expression patterns" value="Expressed in endometrium epithelium and 165 other cell types or tissues"/>
</dbReference>
<dbReference type="ExpressionAtlas" id="Q86SQ4">
    <property type="expression patterns" value="baseline and differential"/>
</dbReference>
<dbReference type="GO" id="GO:0009986">
    <property type="term" value="C:cell surface"/>
    <property type="evidence" value="ECO:0000314"/>
    <property type="project" value="MGI"/>
</dbReference>
<dbReference type="GO" id="GO:0005737">
    <property type="term" value="C:cytoplasm"/>
    <property type="evidence" value="ECO:0000314"/>
    <property type="project" value="MGI"/>
</dbReference>
<dbReference type="GO" id="GO:0005789">
    <property type="term" value="C:endoplasmic reticulum membrane"/>
    <property type="evidence" value="ECO:0000304"/>
    <property type="project" value="Reactome"/>
</dbReference>
<dbReference type="GO" id="GO:0016020">
    <property type="term" value="C:membrane"/>
    <property type="evidence" value="ECO:0000304"/>
    <property type="project" value="GDB"/>
</dbReference>
<dbReference type="GO" id="GO:0005886">
    <property type="term" value="C:plasma membrane"/>
    <property type="evidence" value="ECO:0000314"/>
    <property type="project" value="UniProtKB"/>
</dbReference>
<dbReference type="GO" id="GO:0005518">
    <property type="term" value="F:collagen binding"/>
    <property type="evidence" value="ECO:0000250"/>
    <property type="project" value="UniProtKB"/>
</dbReference>
<dbReference type="GO" id="GO:0004175">
    <property type="term" value="F:endopeptidase activity"/>
    <property type="evidence" value="ECO:0000304"/>
    <property type="project" value="Reactome"/>
</dbReference>
<dbReference type="GO" id="GO:0050840">
    <property type="term" value="F:extracellular matrix binding"/>
    <property type="evidence" value="ECO:0000250"/>
    <property type="project" value="UniProtKB"/>
</dbReference>
<dbReference type="GO" id="GO:0004930">
    <property type="term" value="F:G protein-coupled receptor activity"/>
    <property type="evidence" value="ECO:0000314"/>
    <property type="project" value="UniProtKB"/>
</dbReference>
<dbReference type="GO" id="GO:0043236">
    <property type="term" value="F:laminin binding"/>
    <property type="evidence" value="ECO:0000250"/>
    <property type="project" value="UniProtKB"/>
</dbReference>
<dbReference type="GO" id="GO:0007189">
    <property type="term" value="P:adenylate cyclase-activating G protein-coupled receptor signaling pathway"/>
    <property type="evidence" value="ECO:0000318"/>
    <property type="project" value="GO_Central"/>
</dbReference>
<dbReference type="GO" id="GO:0007193">
    <property type="term" value="P:adenylate cyclase-inhibiting G protein-coupled receptor signaling pathway"/>
    <property type="evidence" value="ECO:0000314"/>
    <property type="project" value="UniProtKB"/>
</dbReference>
<dbReference type="GO" id="GO:0007188">
    <property type="term" value="P:adenylate cyclase-modulating G protein-coupled receptor signaling pathway"/>
    <property type="evidence" value="ECO:0000250"/>
    <property type="project" value="UniProtKB"/>
</dbReference>
<dbReference type="GO" id="GO:0051216">
    <property type="term" value="P:cartilage development"/>
    <property type="evidence" value="ECO:0000250"/>
    <property type="project" value="UniProtKB"/>
</dbReference>
<dbReference type="GO" id="GO:0007166">
    <property type="term" value="P:cell surface receptor signaling pathway"/>
    <property type="evidence" value="ECO:0000250"/>
    <property type="project" value="UniProtKB"/>
</dbReference>
<dbReference type="GO" id="GO:0060856">
    <property type="term" value="P:establishment of blood-brain barrier"/>
    <property type="evidence" value="ECO:0000250"/>
    <property type="project" value="UniProtKB"/>
</dbReference>
<dbReference type="GO" id="GO:0007186">
    <property type="term" value="P:G protein-coupled receptor signaling pathway"/>
    <property type="evidence" value="ECO:0000304"/>
    <property type="project" value="GDB"/>
</dbReference>
<dbReference type="GO" id="GO:0060347">
    <property type="term" value="P:heart trabecula formation"/>
    <property type="evidence" value="ECO:0000318"/>
    <property type="project" value="GO_Central"/>
</dbReference>
<dbReference type="GO" id="GO:0042552">
    <property type="term" value="P:myelination"/>
    <property type="evidence" value="ECO:0000315"/>
    <property type="project" value="UniProtKB"/>
</dbReference>
<dbReference type="GO" id="GO:0022011">
    <property type="term" value="P:myelination in peripheral nervous system"/>
    <property type="evidence" value="ECO:0000250"/>
    <property type="project" value="UniProtKB"/>
</dbReference>
<dbReference type="GO" id="GO:0007399">
    <property type="term" value="P:nervous system development"/>
    <property type="evidence" value="ECO:0000304"/>
    <property type="project" value="Reactome"/>
</dbReference>
<dbReference type="GO" id="GO:0001890">
    <property type="term" value="P:placenta development"/>
    <property type="evidence" value="ECO:0000250"/>
    <property type="project" value="UniProtKB"/>
</dbReference>
<dbReference type="GO" id="GO:0030500">
    <property type="term" value="P:regulation of bone mineralization"/>
    <property type="evidence" value="ECO:0000250"/>
    <property type="project" value="UniProtKB"/>
</dbReference>
<dbReference type="GO" id="GO:1903670">
    <property type="term" value="P:regulation of sprouting angiogenesis"/>
    <property type="evidence" value="ECO:0000250"/>
    <property type="project" value="UniProtKB"/>
</dbReference>
<dbReference type="GO" id="GO:0014037">
    <property type="term" value="P:Schwann cell differentiation"/>
    <property type="evidence" value="ECO:0000315"/>
    <property type="project" value="UniProtKB"/>
</dbReference>
<dbReference type="CDD" id="cd15996">
    <property type="entry name" value="7tmB2_GPR126"/>
    <property type="match status" value="1"/>
</dbReference>
<dbReference type="CDD" id="cd00041">
    <property type="entry name" value="CUB"/>
    <property type="match status" value="1"/>
</dbReference>
<dbReference type="FunFam" id="2.60.120.200:FF:000050">
    <property type="entry name" value="Adhesion G protein-coupled receptor G6"/>
    <property type="match status" value="1"/>
</dbReference>
<dbReference type="FunFam" id="1.20.1070.10:FF:000052">
    <property type="entry name" value="Adhesion G-protein coupled receptor G6"/>
    <property type="match status" value="1"/>
</dbReference>
<dbReference type="FunFam" id="2.60.120.290:FF:000019">
    <property type="entry name" value="Adhesion G-protein coupled receptor G6"/>
    <property type="match status" value="1"/>
</dbReference>
<dbReference type="FunFam" id="2.60.220.50:FF:000006">
    <property type="entry name" value="Adhesion G-protein coupled receptor G6"/>
    <property type="match status" value="1"/>
</dbReference>
<dbReference type="Gene3D" id="2.60.120.200">
    <property type="match status" value="1"/>
</dbReference>
<dbReference type="Gene3D" id="2.60.220.50">
    <property type="match status" value="1"/>
</dbReference>
<dbReference type="Gene3D" id="1.20.1070.10">
    <property type="entry name" value="Rhodopsin 7-helix transmembrane proteins"/>
    <property type="match status" value="1"/>
</dbReference>
<dbReference type="Gene3D" id="2.60.120.290">
    <property type="entry name" value="Spermadhesin, CUB domain"/>
    <property type="match status" value="1"/>
</dbReference>
<dbReference type="InterPro" id="IPR013320">
    <property type="entry name" value="ConA-like_dom_sf"/>
</dbReference>
<dbReference type="InterPro" id="IPR000859">
    <property type="entry name" value="CUB_dom"/>
</dbReference>
<dbReference type="InterPro" id="IPR057244">
    <property type="entry name" value="GAIN_B"/>
</dbReference>
<dbReference type="InterPro" id="IPR046338">
    <property type="entry name" value="GAIN_dom_sf"/>
</dbReference>
<dbReference type="InterPro" id="IPR017981">
    <property type="entry name" value="GPCR_2-like_7TM"/>
</dbReference>
<dbReference type="InterPro" id="IPR000832">
    <property type="entry name" value="GPCR_2_secretin-like"/>
</dbReference>
<dbReference type="InterPro" id="IPR017983">
    <property type="entry name" value="GPCR_2_secretin-like_CS"/>
</dbReference>
<dbReference type="InterPro" id="IPR000203">
    <property type="entry name" value="GPS"/>
</dbReference>
<dbReference type="InterPro" id="IPR001759">
    <property type="entry name" value="Pentraxin-related"/>
</dbReference>
<dbReference type="InterPro" id="IPR035914">
    <property type="entry name" value="Sperma_CUB_dom_sf"/>
</dbReference>
<dbReference type="PANTHER" id="PTHR12011">
    <property type="entry name" value="ADHESION G-PROTEIN COUPLED RECEPTOR"/>
    <property type="match status" value="1"/>
</dbReference>
<dbReference type="PANTHER" id="PTHR12011:SF290">
    <property type="entry name" value="ADHESION G-PROTEIN COUPLED RECEPTOR G6"/>
    <property type="match status" value="1"/>
</dbReference>
<dbReference type="Pfam" id="PF00002">
    <property type="entry name" value="7tm_2"/>
    <property type="match status" value="1"/>
</dbReference>
<dbReference type="Pfam" id="PF00431">
    <property type="entry name" value="CUB"/>
    <property type="match status" value="1"/>
</dbReference>
<dbReference type="Pfam" id="PF01825">
    <property type="entry name" value="GPS"/>
    <property type="match status" value="1"/>
</dbReference>
<dbReference type="Pfam" id="PF00354">
    <property type="entry name" value="Pentaxin"/>
    <property type="match status" value="1"/>
</dbReference>
<dbReference type="Pfam" id="PF25307">
    <property type="entry name" value="SEA_Gpr126"/>
    <property type="match status" value="1"/>
</dbReference>
<dbReference type="PRINTS" id="PR00249">
    <property type="entry name" value="GPCRSECRETIN"/>
</dbReference>
<dbReference type="SMART" id="SM00042">
    <property type="entry name" value="CUB"/>
    <property type="match status" value="1"/>
</dbReference>
<dbReference type="SMART" id="SM00303">
    <property type="entry name" value="GPS"/>
    <property type="match status" value="1"/>
</dbReference>
<dbReference type="SMART" id="SM00159">
    <property type="entry name" value="PTX"/>
    <property type="match status" value="1"/>
</dbReference>
<dbReference type="SUPFAM" id="SSF49899">
    <property type="entry name" value="Concanavalin A-like lectins/glucanases"/>
    <property type="match status" value="1"/>
</dbReference>
<dbReference type="SUPFAM" id="SSF81321">
    <property type="entry name" value="Family A G protein-coupled receptor-like"/>
    <property type="match status" value="1"/>
</dbReference>
<dbReference type="SUPFAM" id="SSF49854">
    <property type="entry name" value="Spermadhesin, CUB domain"/>
    <property type="match status" value="1"/>
</dbReference>
<dbReference type="PROSITE" id="PS01180">
    <property type="entry name" value="CUB"/>
    <property type="match status" value="1"/>
</dbReference>
<dbReference type="PROSITE" id="PS00650">
    <property type="entry name" value="G_PROTEIN_RECEP_F2_2"/>
    <property type="match status" value="1"/>
</dbReference>
<dbReference type="PROSITE" id="PS50261">
    <property type="entry name" value="G_PROTEIN_RECEP_F2_4"/>
    <property type="match status" value="1"/>
</dbReference>
<dbReference type="PROSITE" id="PS50221">
    <property type="entry name" value="GAIN_B"/>
    <property type="match status" value="1"/>
</dbReference>
<dbReference type="PROSITE" id="PS51828">
    <property type="entry name" value="PTX_2"/>
    <property type="match status" value="1"/>
</dbReference>
<keyword id="KW-0025">Alternative splicing</keyword>
<keyword id="KW-0106">Calcium</keyword>
<keyword id="KW-1003">Cell membrane</keyword>
<keyword id="KW-0165">Cleavage on pair of basic residues</keyword>
<keyword id="KW-0903">Direct protein sequencing</keyword>
<keyword id="KW-0225">Disease variant</keyword>
<keyword id="KW-1015">Disulfide bond</keyword>
<keyword id="KW-0297">G-protein coupled receptor</keyword>
<keyword id="KW-0325">Glycoprotein</keyword>
<keyword id="KW-0472">Membrane</keyword>
<keyword id="KW-0479">Metal-binding</keyword>
<keyword id="KW-0597">Phosphoprotein</keyword>
<keyword id="KW-1267">Proteomics identification</keyword>
<keyword id="KW-0675">Receptor</keyword>
<keyword id="KW-1185">Reference proteome</keyword>
<keyword id="KW-0732">Signal</keyword>
<keyword id="KW-0807">Transducer</keyword>
<keyword id="KW-0812">Transmembrane</keyword>
<keyword id="KW-1133">Transmembrane helix</keyword>
<sequence length="1221" mass="136695">MMFRSDRMWSCHWKWKPSPLLFLFALYIMCVPHSVWGCANCRVVLSNPSGTFTSPCYPNDYPNSQACMWTLRAPTGYIIQITFNDFDIEEAPNCIYDSLSLDNGESQTKFCGATAKGLSFNSSANEMHVSFSSDFSIQKKGFNASYIRVAVSLRNQKVILPQTSDAYQVSVAKSISIPELSAFTLCFEATKVGHEDSDWTAFSYSNASFTQLLSFGKAKSGYFLSISDSKCLLNNALPVKEKEDIFAESFEQLCLVWNNSLGSIGVNFKRNYETVPCDSTISKVIPGNGKLLLGSNQNEIVSLKGDIYNFRLWNFTMNAKILSNLSCNVKGNVVDWQNDFWNIPNLALKAESNLSCGSYLIPLPAAELASCADLGTLCQATVNSPSTTPPTVTTNMPVTNRIDKQRNDGIIYRISVVIQNILRHPEVKVQSKVAEWLNSTFQNWNYTVYVVNISFHLSAGEDKIKVKRSLEDEPRLVLWALLVYNATNNTNLEGKIIQQKLLKNNESLDEGLRLHTVNVRQLGHCLAMEEPKGYYWPSIQPSEYVLPCPDKPGFSASRICFYNATNPLVTYWGPVDISNCLKEANEVANQILNLTADGQNLTSANITNIVEQVKRIVNKEENIDITLGSTLMNIFSNILSSSDSDLLESSSEALKTIDELAFKIDLNSTSHVNITTRNLALSVSSLLPGTNAISNFSIGLPSNNESYFQMDFESGQVDPLASVILPPNLLENLSPEDSVLVRRAQFTFFNKTGLFQDVGPQRKTLVSYVMACSIGNITIQNLKDPVQIKIKHTRTQEVHHPICAFWDLNKNKSFGGWNTSGCVAHRDSDASETVCLCNHFTHFGVLMDLPRSASQLDARNTKVLTFISYIGCGISAIFSAATLLTYVAFEKLRRDYPSKILMNLSTALLFLNLLFLLDGWITSFNVDGLCIAVAVLLHFFLLATFTWMGLEAIHMYIALVKVFNTYIRRYILKFCIIGWGLPALVVSVVLASRNNNEVYGKESYGKEKGDEFCWIQDPVIFYVTCAGYFGVMFFLNIAMFIVVMVQICGRNGKRSNRTLREEVLRNLRSVVSLTFLLGMTWGFAFFAWGPLNIPFMYLFSIFNSLQGLFIFIFHCAMKENVQKQWRQHLCCGRFRLADNSDWSKTATNIIKKSSDNLGKSLSSSSIGSNSTYLTSKSKSSSTTYFKRNSHTDNVSYEHSFNKSGSLRQCFHGQVLVKTGPC</sequence>
<accession>Q86SQ4</accession>
<accession>Q5TGN7</accession>
<accession>Q6DHZ4</accession>
<accession>Q6F3F5</accession>
<accession>Q6F3F6</accession>
<accession>Q6F3F7</accession>
<accession>Q6F3F8</accession>
<accession>Q6MZU7</accession>
<accession>Q8IXA4</accession>
<accession>Q8NC14</accession>
<accession>Q96JW0</accession>
<protein>
    <recommendedName>
        <fullName>Adhesion G-protein coupled receptor G6</fullName>
    </recommendedName>
    <alternativeName>
        <fullName evidence="27">Developmentally regulated G-protein-coupled receptor</fullName>
    </alternativeName>
    <alternativeName>
        <fullName evidence="31">G-protein coupled receptor 126</fullName>
    </alternativeName>
    <alternativeName>
        <fullName evidence="28">Vascular inducible G protein-coupled receptor</fullName>
    </alternativeName>
    <component>
        <recommendedName>
            <fullName>Adhesion G-protein coupled receptor G6, N-terminal fragment</fullName>
        </recommendedName>
        <alternativeName>
            <fullName>ADGRG6 N-terminal fragment</fullName>
            <shortName>ADGRG6-NTF</shortName>
        </alternativeName>
    </component>
    <component>
        <recommendedName>
            <fullName>Adhesion G-protein coupled receptor G6, C-terminal fragment</fullName>
        </recommendedName>
        <alternativeName>
            <fullName>ADGRG6 C-terminal fragment</fullName>
            <shortName>ADGRG6-CTF</shortName>
        </alternativeName>
    </component>
</protein>
<name>AGRG6_HUMAN</name>
<gene>
    <name evidence="35" type="primary">ADGRG6</name>
    <name evidence="27" type="synonym">DREG</name>
    <name evidence="31" type="synonym">GPR126</name>
    <name evidence="28" type="synonym">VIGR</name>
</gene>
<feature type="signal peptide" evidence="4">
    <location>
        <begin position="1"/>
        <end position="37"/>
    </location>
</feature>
<feature type="chain" id="PRO_0000012902" description="Adhesion G-protein coupled receptor G6">
    <location>
        <begin position="38"/>
        <end position="1221"/>
    </location>
</feature>
<feature type="chain" id="PRO_0000438596" description="Adhesion G-protein coupled receptor G6, N-terminal fragment" evidence="33">
    <location>
        <begin position="38"/>
        <end position="840"/>
    </location>
</feature>
<feature type="chain" id="PRO_0000438597" description="Adhesion G-protein coupled receptor G6, C-terminal fragment" evidence="33">
    <location>
        <begin position="841"/>
        <end position="1221"/>
    </location>
</feature>
<feature type="topological domain" description="Extracellular" evidence="4">
    <location>
        <begin position="38"/>
        <end position="862"/>
    </location>
</feature>
<feature type="transmembrane region" description="Helical; Name=1" evidence="4">
    <location>
        <begin position="863"/>
        <end position="883"/>
    </location>
</feature>
<feature type="topological domain" description="Cytoplasmic" evidence="4">
    <location>
        <begin position="884"/>
        <end position="903"/>
    </location>
</feature>
<feature type="transmembrane region" description="Helical; Name=2" evidence="4">
    <location>
        <begin position="904"/>
        <end position="924"/>
    </location>
</feature>
<feature type="topological domain" description="Extracellular" evidence="4">
    <location>
        <begin position="925"/>
        <end position="929"/>
    </location>
</feature>
<feature type="transmembrane region" description="Helical; Name=3" evidence="4">
    <location>
        <begin position="930"/>
        <end position="950"/>
    </location>
</feature>
<feature type="topological domain" description="Cytoplasmic" evidence="4">
    <location>
        <begin position="951"/>
        <end position="970"/>
    </location>
</feature>
<feature type="transmembrane region" description="Helical; Name=4" evidence="4">
    <location>
        <begin position="971"/>
        <end position="991"/>
    </location>
</feature>
<feature type="topological domain" description="Extracellular" evidence="4">
    <location>
        <begin position="992"/>
        <end position="1024"/>
    </location>
</feature>
<feature type="transmembrane region" description="Helical; Name=5" evidence="4">
    <location>
        <begin position="1025"/>
        <end position="1045"/>
    </location>
</feature>
<feature type="topological domain" description="Cytoplasmic" evidence="4">
    <location>
        <begin position="1046"/>
        <end position="1069"/>
    </location>
</feature>
<feature type="transmembrane region" description="Helical; Name=6" evidence="4">
    <location>
        <begin position="1070"/>
        <end position="1090"/>
    </location>
</feature>
<feature type="topological domain" description="Extracellular" evidence="4">
    <location>
        <begin position="1091"/>
        <end position="1092"/>
    </location>
</feature>
<feature type="transmembrane region" description="Helical; Name=7" evidence="4">
    <location>
        <begin position="1093"/>
        <end position="1113"/>
    </location>
</feature>
<feature type="topological domain" description="Cytoplasmic" evidence="4">
    <location>
        <begin position="1114"/>
        <end position="1221"/>
    </location>
</feature>
<feature type="domain" description="CUB" evidence="5">
    <location>
        <begin position="41"/>
        <end position="149"/>
    </location>
</feature>
<feature type="domain" description="Pentraxin (PTX)" evidence="7">
    <location>
        <begin position="154"/>
        <end position="356"/>
    </location>
</feature>
<feature type="domain" description="GAIN-B" evidence="6">
    <location>
        <begin position="670"/>
        <end position="853"/>
    </location>
</feature>
<feature type="region of interest" description="Mediates interaction with laminin-2" evidence="2">
    <location>
        <begin position="473"/>
        <end position="837"/>
    </location>
</feature>
<feature type="region of interest" description="GPS" evidence="6">
    <location>
        <begin position="803"/>
        <end position="853"/>
    </location>
</feature>
<feature type="region of interest" description="Stachel" evidence="19">
    <location>
        <begin position="842"/>
        <end position="850"/>
    </location>
</feature>
<feature type="region of interest" description="Disordered" evidence="8">
    <location>
        <begin position="1156"/>
        <end position="1176"/>
    </location>
</feature>
<feature type="binding site" evidence="1">
    <location>
        <position position="89"/>
    </location>
    <ligand>
        <name>Ca(2+)</name>
        <dbReference type="ChEBI" id="CHEBI:29108"/>
    </ligand>
</feature>
<feature type="binding site" evidence="1">
    <location>
        <position position="97"/>
    </location>
    <ligand>
        <name>Ca(2+)</name>
        <dbReference type="ChEBI" id="CHEBI:29108"/>
    </ligand>
</feature>
<feature type="binding site" evidence="1">
    <location>
        <position position="134"/>
    </location>
    <ligand>
        <name>Ca(2+)</name>
        <dbReference type="ChEBI" id="CHEBI:29108"/>
    </ligand>
</feature>
<feature type="binding site" evidence="1">
    <location>
        <position position="136"/>
    </location>
    <ligand>
        <name>Ca(2+)</name>
        <dbReference type="ChEBI" id="CHEBI:29108"/>
    </ligand>
</feature>
<feature type="binding site" evidence="1">
    <location>
        <position position="137"/>
    </location>
    <ligand>
        <name>Ca(2+)</name>
        <dbReference type="ChEBI" id="CHEBI:29108"/>
    </ligand>
</feature>
<feature type="binding site" evidence="34">
    <location>
        <position position="1103"/>
    </location>
    <ligand>
        <name>17alpha-hydroxyprogesterone</name>
        <dbReference type="ChEBI" id="CHEBI:17252"/>
    </ligand>
</feature>
<feature type="site" description="Cleavage; by furin like-convertase" evidence="12">
    <location>
        <begin position="467"/>
        <end position="468"/>
    </location>
</feature>
<feature type="site" description="Cleavage" evidence="12">
    <location>
        <begin position="840"/>
        <end position="841"/>
    </location>
</feature>
<feature type="modified residue" description="Phosphoserine" evidence="36">
    <location>
        <position position="1165"/>
    </location>
</feature>
<feature type="modified residue" description="Phosphoserine" evidence="2">
    <location>
        <position position="1168"/>
    </location>
</feature>
<feature type="glycosylation site" description="N-linked (GlcNAc...) asparagine" evidence="4">
    <location>
        <position position="121"/>
    </location>
</feature>
<feature type="glycosylation site" description="N-linked (GlcNAc...) asparagine" evidence="15">
    <location>
        <position position="143"/>
    </location>
</feature>
<feature type="glycosylation site" description="N-linked (GlcNAc...) asparagine" evidence="4">
    <location>
        <position position="206"/>
    </location>
</feature>
<feature type="glycosylation site" description="N-linked (GlcNAc...) asparagine" evidence="4">
    <location>
        <position position="258"/>
    </location>
</feature>
<feature type="glycosylation site" description="N-linked (GlcNAc...) asparagine" evidence="4">
    <location>
        <position position="314"/>
    </location>
</feature>
<feature type="glycosylation site" description="N-linked (GlcNAc...) asparagine" evidence="11">
    <location>
        <position position="324"/>
    </location>
</feature>
<feature type="glycosylation site" description="N-linked (GlcNAc...) asparagine" evidence="4">
    <location>
        <position position="353"/>
    </location>
</feature>
<feature type="glycosylation site" description="N-linked (GlcNAc...) asparagine" evidence="15">
    <location>
        <position position="438"/>
    </location>
</feature>
<feature type="glycosylation site" description="N-linked (GlcNAc...) asparagine" evidence="15">
    <location>
        <position position="445"/>
    </location>
</feature>
<feature type="glycosylation site" description="N-linked (GlcNAc...) asparagine" evidence="4">
    <location>
        <position position="452"/>
    </location>
</feature>
<feature type="glycosylation site" description="N-linked (GlcNAc...) asparagine" evidence="4">
    <location>
        <position position="485"/>
    </location>
</feature>
<feature type="glycosylation site" description="N-linked (GlcNAc...) asparagine" evidence="4">
    <location>
        <position position="488"/>
    </location>
</feature>
<feature type="glycosylation site" description="N-linked (GlcNAc...) asparagine" evidence="4">
    <location>
        <position position="505"/>
    </location>
</feature>
<feature type="glycosylation site" description="N-linked (GlcNAc...) asparagine" evidence="4">
    <location>
        <position position="563"/>
    </location>
</feature>
<feature type="glycosylation site" description="N-linked (GlcNAc...) asparagine" evidence="4">
    <location>
        <position position="593"/>
    </location>
</feature>
<feature type="glycosylation site" description="N-linked (GlcNAc...) asparagine" evidence="4">
    <location>
        <position position="600"/>
    </location>
</feature>
<feature type="glycosylation site" description="N-linked (GlcNAc...) asparagine" evidence="4">
    <location>
        <position position="605"/>
    </location>
</feature>
<feature type="glycosylation site" description="N-linked (GlcNAc...) asparagine" evidence="4">
    <location>
        <position position="667"/>
    </location>
</feature>
<feature type="glycosylation site" description="N-linked (GlcNAc...) asparagine" evidence="4">
    <location>
        <position position="673"/>
    </location>
</feature>
<feature type="glycosylation site" description="N-linked (GlcNAc...) asparagine" evidence="4">
    <location>
        <position position="695"/>
    </location>
</feature>
<feature type="glycosylation site" description="N-linked (GlcNAc...) asparagine" evidence="4">
    <location>
        <position position="704"/>
    </location>
</feature>
<feature type="glycosylation site" description="N-linked (GlcNAc...) asparagine" evidence="4">
    <location>
        <position position="750"/>
    </location>
</feature>
<feature type="glycosylation site" description="N-linked (GlcNAc...) asparagine" evidence="4">
    <location>
        <position position="776"/>
    </location>
</feature>
<feature type="glycosylation site" description="N-linked (GlcNAc...) asparagine" evidence="4">
    <location>
        <position position="811"/>
    </location>
</feature>
<feature type="glycosylation site" description="N-linked (GlcNAc...) asparagine" evidence="4">
    <location>
        <position position="818"/>
    </location>
</feature>
<feature type="disulfide bond" evidence="5">
    <location>
        <begin position="41"/>
        <end position="67"/>
    </location>
</feature>
<feature type="disulfide bond" evidence="5">
    <location>
        <begin position="94"/>
        <end position="111"/>
    </location>
</feature>
<feature type="disulfide bond" evidence="7">
    <location>
        <begin position="186"/>
        <end position="254"/>
    </location>
</feature>
<feature type="disulfide bond" evidence="1">
    <location>
        <begin position="231"/>
        <end position="277"/>
    </location>
</feature>
<feature type="disulfide bond" evidence="1">
    <location>
        <begin position="525"/>
        <end position="560"/>
    </location>
</feature>
<feature type="disulfide bond" evidence="1">
    <location>
        <begin position="548"/>
        <end position="580"/>
    </location>
</feature>
<feature type="disulfide bond" evidence="6">
    <location>
        <begin position="803"/>
        <end position="835"/>
    </location>
</feature>
<feature type="disulfide bond" evidence="6">
    <location>
        <begin position="822"/>
        <end position="837"/>
    </location>
</feature>
<feature type="splice variant" id="VSP_010747" description="In isoform 2 and isoform 4." evidence="27 28 29 30">
    <location>
        <begin position="380"/>
        <end position="407"/>
    </location>
</feature>
<feature type="splice variant" id="VSP_010748" description="In isoform 3 and isoform 4." evidence="26 27 28 29">
    <original>NVSYEHSFNKSGSLRQCFHGQVLVKTGPC</original>
    <variation>SASMDKSLSKLAHADGDQTSIIPVHQVIDKVKGYCNAHSDNFYKNIIMSDTFSHSTKF</variation>
    <location>
        <begin position="1193"/>
        <end position="1221"/>
    </location>
</feature>
<feature type="sequence variant" id="VAR_054128" description="In dbSNP:rs17280293.">
    <original>S</original>
    <variation>G</variation>
    <location>
        <position position="123"/>
    </location>
</feature>
<feature type="sequence variant" id="VAR_024478" description="In dbSNP:rs11155242." evidence="14">
    <original>K</original>
    <variation>Q</variation>
    <location>
        <position position="230"/>
    </location>
</feature>
<feature type="sequence variant" id="VAR_075146" description="In LCCS9; decreases the autoprocessing/cleavage of the receptor." evidence="20">
    <original>V</original>
    <variation>E</variation>
    <location>
        <position position="741"/>
    </location>
</feature>
<feature type="sequence variant" id="VAR_075147" description="In LCCS9; dbSNP:rs793888525." evidence="20">
    <original>V</original>
    <variation>E</variation>
    <location>
        <position position="769"/>
    </location>
</feature>
<feature type="sequence variant" id="VAR_076965" description="Found in patients with aggressive periodontitis; impairs cAMP production; abrogates osteoblastic differentiation; dbSNP:rs536714306." evidence="21">
    <original>R</original>
    <variation>Q</variation>
    <location>
        <position position="1057"/>
    </location>
</feature>
<feature type="sequence variant" id="VAR_054129" description="In dbSNP:rs1262686." evidence="9 10 12 14 16 25">
    <original>Q</original>
    <variation>R</variation>
    <location>
        <position position="1127"/>
    </location>
</feature>
<feature type="mutagenesis site" description="Abolished cleavage by furin like-convertase without affecting localization to the cell surface." evidence="12">
    <original>R</original>
    <variation>A</variation>
    <location>
        <position position="468"/>
    </location>
</feature>
<feature type="mutagenesis site" description="No effect on cleavage." evidence="12">
    <original>S</original>
    <variation>A</variation>
    <location>
        <position position="469"/>
    </location>
</feature>
<feature type="mutagenesis site" description="No cleavage and not detected at the cell surface." evidence="12">
    <original>C</original>
    <variation>S</variation>
    <location>
        <position position="803"/>
    </location>
</feature>
<feature type="mutagenesis site" description="No effect on G-protein-mediated cAMP release." evidence="19">
    <original>S</original>
    <variation>A</variation>
    <location>
        <position position="813"/>
    </location>
</feature>
<feature type="mutagenesis site" description="Abolishes G-protein-mediated cAMP release." evidence="19">
    <original>G</original>
    <variation>A</variation>
    <location>
        <position position="815"/>
    </location>
</feature>
<feature type="mutagenesis site" description="Abolishes G-protein-mediated cAMP release." evidence="19">
    <original>N</original>
    <variation>A</variation>
    <location>
        <position position="818"/>
    </location>
</feature>
<feature type="mutagenesis site" description="Abolishes G-protein-mediated cAMP release." evidence="19">
    <original>T</original>
    <variation>A</variation>
    <location>
        <position position="819"/>
    </location>
</feature>
<feature type="mutagenesis site" description="No cleavage and not detected at the cell surface." evidence="12">
    <original>C</original>
    <variation>S</variation>
    <location>
        <position position="822"/>
    </location>
</feature>
<feature type="mutagenesis site" description="No cleavage and not detected at the cell surface." evidence="12">
    <original>C</original>
    <variation>S</variation>
    <location>
        <position position="835"/>
    </location>
</feature>
<feature type="mutagenesis site" description="No cleavage and not detected at the cell surface." evidence="12">
    <original>C</original>
    <variation>S</variation>
    <location>
        <position position="837"/>
    </location>
</feature>
<feature type="mutagenesis site" description="No cleavage but detected at cell surface." evidence="12">
    <original>T</original>
    <variation>A</variation>
    <location>
        <position position="841"/>
    </location>
</feature>
<feature type="mutagenesis site" description="No cleavage and not detected at the cell surface." evidence="12">
    <original>T</original>
    <variation>P</variation>
    <location>
        <position position="841"/>
    </location>
</feature>
<feature type="mutagenesis site" description="Strongly decreased G-protein coupled receptor activity in response to 17alpha-hydroxyprogesterone (17OHP)." evidence="23 24">
    <original>F</original>
    <variation>A</variation>
    <location>
        <position position="915"/>
    </location>
</feature>
<feature type="mutagenesis site" description="Does not impair G-protein coupled receptor activity in response to 17alpha-hydroxyprogesterone (17OHP)." evidence="23">
    <original>L</original>
    <variation>A</variation>
    <location>
        <position position="916"/>
    </location>
</feature>
<feature type="mutagenesis site" description="Does not impair G-protein coupled receptor activity in response to 17alpha-hydroxyprogesterone (17OHP)." evidence="23">
    <original>L</original>
    <variation>A</variation>
    <location>
        <position position="937"/>
    </location>
</feature>
<feature type="mutagenesis site" description="Strongly decreased G-protein coupled receptor activity in response to 17alpha-hydroxyprogesterone (17OHP)." evidence="23 24">
    <original>L</original>
    <variation>A</variation>
    <location>
        <position position="941"/>
    </location>
</feature>
<feature type="mutagenesis site" description="Impaired conformational change in response to 17alpha-hydroxyprogesterone (17OHP) without affecting response to progesterone." evidence="23">
    <original>K</original>
    <variation>A</variation>
    <location>
        <position position="1001"/>
    </location>
</feature>
<feature type="mutagenesis site" description="Impaired conformational change in response to 17alpha-hydroxyprogesterone (17OHP) without affecting response to progesterone." evidence="23">
    <original>F</original>
    <variation>A</variation>
    <location>
        <position position="1012"/>
    </location>
</feature>
<feature type="mutagenesis site" description="Strongly decreased G-protein coupled receptor activity in response to 17alpha-hydroxyprogesterone (17OHP)." evidence="23">
    <original>W</original>
    <variation>A</variation>
    <location>
        <position position="1014"/>
    </location>
</feature>
<feature type="mutagenesis site" description="Strongly decreased G-protein coupled receptor activity in response to 17alpha-hydroxyprogesterone (17OHP)." evidence="23 24">
    <original>W</original>
    <variation>A</variation>
    <location>
        <position position="1081"/>
    </location>
</feature>
<feature type="mutagenesis site" description="Impaired response to progesterone, but not to17alpha-hydroxyprogesterone (17OHP)." evidence="23">
    <original>F</original>
    <variation>A</variation>
    <location>
        <position position="1085"/>
    </location>
</feature>
<feature type="mutagenesis site" description="Strongly decreased G-protein coupled receptor activity in response to 17alpha-hydroxyprogesterone (17OHP)." evidence="23">
    <original>L</original>
    <variation>A</variation>
    <location>
        <position position="1091"/>
    </location>
</feature>
<feature type="mutagenesis site" description="Strongly decreased G-protein coupled receptor activity in response to 17alpha-hydroxyprogesterone (17OHP)." evidence="23">
    <original>F</original>
    <variation>A</variation>
    <location>
        <position position="1099"/>
    </location>
</feature>
<feature type="mutagenesis site" description="Decreased activation by 17alpha-hydroxyprogesterone." evidence="24">
    <original>F</original>
    <variation>L</variation>
    <location>
        <position position="1099"/>
    </location>
</feature>
<feature type="mutagenesis site" description="Strongly decreased G-protein coupled receptor activity in response to 17alpha-hydroxyprogesterone (17OHP)." evidence="23 24">
    <original>N</original>
    <variation>A</variation>
    <location>
        <position position="1103"/>
    </location>
</feature>
<feature type="sequence conflict" description="In Ref. 3; CAE45986." evidence="32" ref="3">
    <original>N</original>
    <variation>S</variation>
    <location>
        <position position="622"/>
    </location>
</feature>
<feature type="sequence conflict" description="In Ref. 3; CAE45930." evidence="32" ref="3">
    <original>I</original>
    <variation>V</variation>
    <location>
        <position position="623"/>
    </location>
</feature>
<feature type="sequence conflict" description="In Ref. 3; CAE45986." evidence="32" ref="3">
    <original>F</original>
    <variation>S</variation>
    <location>
        <position position="708"/>
    </location>
</feature>
<feature type="sequence conflict" description="In Ref. 3; CAE45930." evidence="32" ref="3">
    <original>K</original>
    <variation>Q</variation>
    <location>
        <position position="763"/>
    </location>
</feature>
<feature type="sequence conflict" description="In Ref. 5; AAH75798." evidence="32" ref="5">
    <original>L</original>
    <variation>P</variation>
    <location>
        <position position="908"/>
    </location>
</feature>
<reference key="1">
    <citation type="journal article" date="2004" name="FEBS Lett.">
        <title>VIGR -- a novel inducible adhesion family G-protein coupled receptor in endothelial cells.</title>
        <authorList>
            <person name="Stehlik C."/>
            <person name="Kroismayr R."/>
            <person name="Dorfleutner A."/>
            <person name="Binder B.R."/>
            <person name="Lipp J."/>
        </authorList>
    </citation>
    <scope>NUCLEOTIDE SEQUENCE [MRNA] (ISOFORM 4)</scope>
    <scope>TISSUE SPECIFICITY</scope>
    <scope>SUBCELLULAR LOCATION</scope>
    <scope>INDUCTION</scope>
    <scope>GLYCOSYLATION</scope>
    <source>
        <tissue>Vein</tissue>
    </source>
</reference>
<reference key="2">
    <citation type="journal article" date="2004" name="Genes Cells">
        <title>DREG, a developmentally regulated G protein-coupled receptor containing two conserved proteolytic cleavage sites.</title>
        <authorList>
            <person name="Moriguchi T."/>
            <person name="Haraguchi K."/>
            <person name="Ueda N."/>
            <person name="Okada M."/>
            <person name="Furuya T."/>
            <person name="Akiyama T."/>
        </authorList>
    </citation>
    <scope>NUCLEOTIDE SEQUENCE [MRNA] (ISOFORMS 1; 2; 3 AND 4)</scope>
    <scope>PROTEIN SEQUENCE OF 469-483 AND 841-845</scope>
    <scope>SUBCELLULAR LOCATION</scope>
    <scope>MUTAGENESIS OF ARG-468; SER-469; CYS-803; CYS-822; CYS-835; CYS-837 AND THR-841</scope>
    <scope>PROTEOLYTIC PROCESSING</scope>
    <scope>CLEAVAGE BY FURIN-LIKE CONVERTASE</scope>
    <scope>VARIANT ARG-1127</scope>
</reference>
<reference key="3">
    <citation type="journal article" date="2007" name="BMC Genomics">
        <title>The full-ORF clone resource of the German cDNA consortium.</title>
        <authorList>
            <person name="Bechtel S."/>
            <person name="Rosenfelder H."/>
            <person name="Duda A."/>
            <person name="Schmidt C.P."/>
            <person name="Ernst U."/>
            <person name="Wellenreuther R."/>
            <person name="Mehrle A."/>
            <person name="Schuster C."/>
            <person name="Bahr A."/>
            <person name="Bloecker H."/>
            <person name="Heubner D."/>
            <person name="Hoerlein A."/>
            <person name="Michel G."/>
            <person name="Wedler H."/>
            <person name="Koehrer K."/>
            <person name="Ottenwaelder B."/>
            <person name="Poustka A."/>
            <person name="Wiemann S."/>
            <person name="Schupp I."/>
        </authorList>
    </citation>
    <scope>NUCLEOTIDE SEQUENCE [LARGE SCALE MRNA] (ISOFORMS 1 AND 2)</scope>
    <scope>VARIANT ARG-1127</scope>
    <source>
        <tissue>Uterus</tissue>
    </source>
</reference>
<reference key="4">
    <citation type="journal article" date="2003" name="Nature">
        <title>The DNA sequence and analysis of human chromosome 6.</title>
        <authorList>
            <person name="Mungall A.J."/>
            <person name="Palmer S.A."/>
            <person name="Sims S.K."/>
            <person name="Edwards C.A."/>
            <person name="Ashurst J.L."/>
            <person name="Wilming L."/>
            <person name="Jones M.C."/>
            <person name="Horton R."/>
            <person name="Hunt S.E."/>
            <person name="Scott C.E."/>
            <person name="Gilbert J.G.R."/>
            <person name="Clamp M.E."/>
            <person name="Bethel G."/>
            <person name="Milne S."/>
            <person name="Ainscough R."/>
            <person name="Almeida J.P."/>
            <person name="Ambrose K.D."/>
            <person name="Andrews T.D."/>
            <person name="Ashwell R.I.S."/>
            <person name="Babbage A.K."/>
            <person name="Bagguley C.L."/>
            <person name="Bailey J."/>
            <person name="Banerjee R."/>
            <person name="Barker D.J."/>
            <person name="Barlow K.F."/>
            <person name="Bates K."/>
            <person name="Beare D.M."/>
            <person name="Beasley H."/>
            <person name="Beasley O."/>
            <person name="Bird C.P."/>
            <person name="Blakey S.E."/>
            <person name="Bray-Allen S."/>
            <person name="Brook J."/>
            <person name="Brown A.J."/>
            <person name="Brown J.Y."/>
            <person name="Burford D.C."/>
            <person name="Burrill W."/>
            <person name="Burton J."/>
            <person name="Carder C."/>
            <person name="Carter N.P."/>
            <person name="Chapman J.C."/>
            <person name="Clark S.Y."/>
            <person name="Clark G."/>
            <person name="Clee C.M."/>
            <person name="Clegg S."/>
            <person name="Cobley V."/>
            <person name="Collier R.E."/>
            <person name="Collins J.E."/>
            <person name="Colman L.K."/>
            <person name="Corby N.R."/>
            <person name="Coville G.J."/>
            <person name="Culley K.M."/>
            <person name="Dhami P."/>
            <person name="Davies J."/>
            <person name="Dunn M."/>
            <person name="Earthrowl M.E."/>
            <person name="Ellington A.E."/>
            <person name="Evans K.A."/>
            <person name="Faulkner L."/>
            <person name="Francis M.D."/>
            <person name="Frankish A."/>
            <person name="Frankland J."/>
            <person name="French L."/>
            <person name="Garner P."/>
            <person name="Garnett J."/>
            <person name="Ghori M.J."/>
            <person name="Gilby L.M."/>
            <person name="Gillson C.J."/>
            <person name="Glithero R.J."/>
            <person name="Grafham D.V."/>
            <person name="Grant M."/>
            <person name="Gribble S."/>
            <person name="Griffiths C."/>
            <person name="Griffiths M.N.D."/>
            <person name="Hall R."/>
            <person name="Halls K.S."/>
            <person name="Hammond S."/>
            <person name="Harley J.L."/>
            <person name="Hart E.A."/>
            <person name="Heath P.D."/>
            <person name="Heathcott R."/>
            <person name="Holmes S.J."/>
            <person name="Howden P.J."/>
            <person name="Howe K.L."/>
            <person name="Howell G.R."/>
            <person name="Huckle E."/>
            <person name="Humphray S.J."/>
            <person name="Humphries M.D."/>
            <person name="Hunt A.R."/>
            <person name="Johnson C.M."/>
            <person name="Joy A.A."/>
            <person name="Kay M."/>
            <person name="Keenan S.J."/>
            <person name="Kimberley A.M."/>
            <person name="King A."/>
            <person name="Laird G.K."/>
            <person name="Langford C."/>
            <person name="Lawlor S."/>
            <person name="Leongamornlert D.A."/>
            <person name="Leversha M."/>
            <person name="Lloyd C.R."/>
            <person name="Lloyd D.M."/>
            <person name="Loveland J.E."/>
            <person name="Lovell J."/>
            <person name="Martin S."/>
            <person name="Mashreghi-Mohammadi M."/>
            <person name="Maslen G.L."/>
            <person name="Matthews L."/>
            <person name="McCann O.T."/>
            <person name="McLaren S.J."/>
            <person name="McLay K."/>
            <person name="McMurray A."/>
            <person name="Moore M.J.F."/>
            <person name="Mullikin J.C."/>
            <person name="Niblett D."/>
            <person name="Nickerson T."/>
            <person name="Novik K.L."/>
            <person name="Oliver K."/>
            <person name="Overton-Larty E.K."/>
            <person name="Parker A."/>
            <person name="Patel R."/>
            <person name="Pearce A.V."/>
            <person name="Peck A.I."/>
            <person name="Phillimore B.J.C.T."/>
            <person name="Phillips S."/>
            <person name="Plumb R.W."/>
            <person name="Porter K.M."/>
            <person name="Ramsey Y."/>
            <person name="Ranby S.A."/>
            <person name="Rice C.M."/>
            <person name="Ross M.T."/>
            <person name="Searle S.M."/>
            <person name="Sehra H.K."/>
            <person name="Sheridan E."/>
            <person name="Skuce C.D."/>
            <person name="Smith S."/>
            <person name="Smith M."/>
            <person name="Spraggon L."/>
            <person name="Squares S.L."/>
            <person name="Steward C.A."/>
            <person name="Sycamore N."/>
            <person name="Tamlyn-Hall G."/>
            <person name="Tester J."/>
            <person name="Theaker A.J."/>
            <person name="Thomas D.W."/>
            <person name="Thorpe A."/>
            <person name="Tracey A."/>
            <person name="Tromans A."/>
            <person name="Tubby B."/>
            <person name="Wall M."/>
            <person name="Wallis J.M."/>
            <person name="West A.P."/>
            <person name="White S.S."/>
            <person name="Whitehead S.L."/>
            <person name="Whittaker H."/>
            <person name="Wild A."/>
            <person name="Willey D.J."/>
            <person name="Wilmer T.E."/>
            <person name="Wood J.M."/>
            <person name="Wray P.W."/>
            <person name="Wyatt J.C."/>
            <person name="Young L."/>
            <person name="Younger R.M."/>
            <person name="Bentley D.R."/>
            <person name="Coulson A."/>
            <person name="Durbin R.M."/>
            <person name="Hubbard T."/>
            <person name="Sulston J.E."/>
            <person name="Dunham I."/>
            <person name="Rogers J."/>
            <person name="Beck S."/>
        </authorList>
    </citation>
    <scope>NUCLEOTIDE SEQUENCE [LARGE SCALE GENOMIC DNA]</scope>
</reference>
<reference key="5">
    <citation type="journal article" date="2004" name="Genome Res.">
        <title>The status, quality, and expansion of the NIH full-length cDNA project: the Mammalian Gene Collection (MGC).</title>
        <authorList>
            <consortium name="The MGC Project Team"/>
        </authorList>
    </citation>
    <scope>NUCLEOTIDE SEQUENCE [LARGE SCALE MRNA] (ISOFORM 4)</scope>
    <scope>VARIANTS GLN-230 AND ARG-1127</scope>
    <source>
        <tissue>Placenta</tissue>
    </source>
</reference>
<reference key="6">
    <citation type="journal article" date="2004" name="Nat. Genet.">
        <title>Complete sequencing and characterization of 21,243 full-length human cDNAs.</title>
        <authorList>
            <person name="Ota T."/>
            <person name="Suzuki Y."/>
            <person name="Nishikawa T."/>
            <person name="Otsuki T."/>
            <person name="Sugiyama T."/>
            <person name="Irie R."/>
            <person name="Wakamatsu A."/>
            <person name="Hayashi K."/>
            <person name="Sato H."/>
            <person name="Nagai K."/>
            <person name="Kimura K."/>
            <person name="Makita H."/>
            <person name="Sekine M."/>
            <person name="Obayashi M."/>
            <person name="Nishi T."/>
            <person name="Shibahara T."/>
            <person name="Tanaka T."/>
            <person name="Ishii S."/>
            <person name="Yamamoto J."/>
            <person name="Saito K."/>
            <person name="Kawai Y."/>
            <person name="Isono Y."/>
            <person name="Nakamura Y."/>
            <person name="Nagahari K."/>
            <person name="Murakami K."/>
            <person name="Yasuda T."/>
            <person name="Iwayanagi T."/>
            <person name="Wagatsuma M."/>
            <person name="Shiratori A."/>
            <person name="Sudo H."/>
            <person name="Hosoiri T."/>
            <person name="Kaku Y."/>
            <person name="Kodaira H."/>
            <person name="Kondo H."/>
            <person name="Sugawara M."/>
            <person name="Takahashi M."/>
            <person name="Kanda K."/>
            <person name="Yokoi T."/>
            <person name="Furuya T."/>
            <person name="Kikkawa E."/>
            <person name="Omura Y."/>
            <person name="Abe K."/>
            <person name="Kamihara K."/>
            <person name="Katsuta N."/>
            <person name="Sato K."/>
            <person name="Tanikawa M."/>
            <person name="Yamazaki M."/>
            <person name="Ninomiya K."/>
            <person name="Ishibashi T."/>
            <person name="Yamashita H."/>
            <person name="Murakawa K."/>
            <person name="Fujimori K."/>
            <person name="Tanai H."/>
            <person name="Kimata M."/>
            <person name="Watanabe M."/>
            <person name="Hiraoka S."/>
            <person name="Chiba Y."/>
            <person name="Ishida S."/>
            <person name="Ono Y."/>
            <person name="Takiguchi S."/>
            <person name="Watanabe S."/>
            <person name="Yosida M."/>
            <person name="Hotuta T."/>
            <person name="Kusano J."/>
            <person name="Kanehori K."/>
            <person name="Takahashi-Fujii A."/>
            <person name="Hara H."/>
            <person name="Tanase T.-O."/>
            <person name="Nomura Y."/>
            <person name="Togiya S."/>
            <person name="Komai F."/>
            <person name="Hara R."/>
            <person name="Takeuchi K."/>
            <person name="Arita M."/>
            <person name="Imose N."/>
            <person name="Musashino K."/>
            <person name="Yuuki H."/>
            <person name="Oshima A."/>
            <person name="Sasaki N."/>
            <person name="Aotsuka S."/>
            <person name="Yoshikawa Y."/>
            <person name="Matsunawa H."/>
            <person name="Ichihara T."/>
            <person name="Shiohata N."/>
            <person name="Sano S."/>
            <person name="Moriya S."/>
            <person name="Momiyama H."/>
            <person name="Satoh N."/>
            <person name="Takami S."/>
            <person name="Terashima Y."/>
            <person name="Suzuki O."/>
            <person name="Nakagawa S."/>
            <person name="Senoh A."/>
            <person name="Mizoguchi H."/>
            <person name="Goto Y."/>
            <person name="Shimizu F."/>
            <person name="Wakebe H."/>
            <person name="Hishigaki H."/>
            <person name="Watanabe T."/>
            <person name="Sugiyama A."/>
            <person name="Takemoto M."/>
            <person name="Kawakami B."/>
            <person name="Yamazaki M."/>
            <person name="Watanabe K."/>
            <person name="Kumagai A."/>
            <person name="Itakura S."/>
            <person name="Fukuzumi Y."/>
            <person name="Fujimori Y."/>
            <person name="Komiyama M."/>
            <person name="Tashiro H."/>
            <person name="Tanigami A."/>
            <person name="Fujiwara T."/>
            <person name="Ono T."/>
            <person name="Yamada K."/>
            <person name="Fujii Y."/>
            <person name="Ozaki K."/>
            <person name="Hirao M."/>
            <person name="Ohmori Y."/>
            <person name="Kawabata A."/>
            <person name="Hikiji T."/>
            <person name="Kobatake N."/>
            <person name="Inagaki H."/>
            <person name="Ikema Y."/>
            <person name="Okamoto S."/>
            <person name="Okitani R."/>
            <person name="Kawakami T."/>
            <person name="Noguchi S."/>
            <person name="Itoh T."/>
            <person name="Shigeta K."/>
            <person name="Senba T."/>
            <person name="Matsumura K."/>
            <person name="Nakajima Y."/>
            <person name="Mizuno T."/>
            <person name="Morinaga M."/>
            <person name="Sasaki M."/>
            <person name="Togashi T."/>
            <person name="Oyama M."/>
            <person name="Hata H."/>
            <person name="Watanabe M."/>
            <person name="Komatsu T."/>
            <person name="Mizushima-Sugano J."/>
            <person name="Satoh T."/>
            <person name="Shirai Y."/>
            <person name="Takahashi Y."/>
            <person name="Nakagawa K."/>
            <person name="Okumura K."/>
            <person name="Nagase T."/>
            <person name="Nomura N."/>
            <person name="Kikuchi H."/>
            <person name="Masuho Y."/>
            <person name="Yamashita R."/>
            <person name="Nakai K."/>
            <person name="Yada T."/>
            <person name="Nakamura Y."/>
            <person name="Ohara O."/>
            <person name="Isogai T."/>
            <person name="Sugano S."/>
        </authorList>
    </citation>
    <scope>NUCLEOTIDE SEQUENCE [LARGE SCALE MRNA] OF 646-1221</scope>
    <scope>VARIANT ARG-1127</scope>
    <source>
        <tissue>Placenta</tissue>
    </source>
</reference>
<reference key="7">
    <citation type="journal article" date="2003" name="Biochem. Biophys. Res. Commun.">
        <title>There exist at least 30 human G-protein-coupled receptors with long Ser/Thr-rich N-termini.</title>
        <authorList>
            <person name="Fredriksson R."/>
            <person name="Gloriam D.E.I."/>
            <person name="Hoeglund P.J."/>
            <person name="Lagerstroem M.C."/>
            <person name="Schioeth H.B."/>
        </authorList>
    </citation>
    <scope>NUCLEOTIDE SEQUENCE [MRNA] OF 710-1221 (ISOFORM 3)</scope>
    <scope>VARIANT ARG-1127</scope>
</reference>
<reference key="8">
    <citation type="submission" date="2003-10" db="EMBL/GenBank/DDBJ databases">
        <authorList>
            <person name="Ji D."/>
            <person name="Cheng J."/>
            <person name="Wang J."/>
            <person name="Dong J."/>
            <person name="Yang Q."/>
            <person name="Dang X."/>
            <person name="Liu Y."/>
        </authorList>
    </citation>
    <scope>NUCLEOTIDE SEQUENCE [MRNA] OF 1032-1221</scope>
    <scope>VARIANT ARG-1127</scope>
</reference>
<reference key="9">
    <citation type="journal article" date="2004" name="Mol. Cell. Proteomics">
        <title>A proteomic analysis of human bile.</title>
        <authorList>
            <person name="Kristiansen T.Z."/>
            <person name="Bunkenborg J."/>
            <person name="Gronborg M."/>
            <person name="Molina H."/>
            <person name="Thuluvath P.J."/>
            <person name="Argani P."/>
            <person name="Goggins M.G."/>
            <person name="Maitra A."/>
            <person name="Pandey A."/>
        </authorList>
    </citation>
    <scope>GLYCOSYLATION [LARGE SCALE ANALYSIS] AT ASN-324</scope>
    <source>
        <tissue>Bile</tissue>
    </source>
</reference>
<reference key="10">
    <citation type="journal article" date="2005" name="J. Proteome Res.">
        <title>Human plasma N-glycoproteome analysis by immunoaffinity subtraction, hydrazide chemistry, and mass spectrometry.</title>
        <authorList>
            <person name="Liu T."/>
            <person name="Qian W.-J."/>
            <person name="Gritsenko M.A."/>
            <person name="Camp D.G. II"/>
            <person name="Monroe M.E."/>
            <person name="Moore R.J."/>
            <person name="Smith R.D."/>
        </authorList>
    </citation>
    <scope>GLYCOSYLATION [LARGE SCALE ANALYSIS] AT ASN-143; ASN-438 AND ASN-445</scope>
    <source>
        <tissue>Plasma</tissue>
    </source>
</reference>
<reference key="11">
    <citation type="journal article" date="2008" name="Nat. Genet.">
        <title>Identification of ten loci associated with height highlights new biological pathways in human growth.</title>
        <authorList>
            <person name="Lettre G."/>
            <person name="Jackson A.U."/>
            <person name="Gieger C."/>
            <person name="Schumacher F.R."/>
            <person name="Berndt S.I."/>
            <person name="Sanna S."/>
            <person name="Eyheramendy S."/>
            <person name="Voight B.F."/>
            <person name="Butler J.L."/>
            <person name="Guiducci C."/>
            <person name="Illig T."/>
            <person name="Hackett R."/>
            <person name="Heid I.M."/>
            <person name="Jacobs K.B."/>
            <person name="Lyssenko V."/>
            <person name="Uda M."/>
            <person name="Boehnke M."/>
            <person name="Chanock S.J."/>
            <person name="Groop L.C."/>
            <person name="Hu F.B."/>
            <person name="Isomaa B."/>
            <person name="Kraft P."/>
            <person name="Peltonen L."/>
            <person name="Salomaa V."/>
            <person name="Schlessinger D."/>
            <person name="Hunter D.J."/>
            <person name="Hayes R.B."/>
            <person name="Abecasis G.R."/>
            <person name="Wichmann H.-E."/>
            <person name="Mohlke K.L."/>
            <person name="Hirschhorn J.N."/>
        </authorList>
    </citation>
    <scope>FUNCTION</scope>
    <scope>INVOLVEMENT IN STATURE AS A QUANTITATIVE TRAIT</scope>
</reference>
<reference key="12">
    <citation type="journal article" date="2008" name="Proc. Natl. Acad. Sci. U.S.A.">
        <title>A quantitative atlas of mitotic phosphorylation.</title>
        <authorList>
            <person name="Dephoure N."/>
            <person name="Zhou C."/>
            <person name="Villen J."/>
            <person name="Beausoleil S.A."/>
            <person name="Bakalarski C.E."/>
            <person name="Elledge S.J."/>
            <person name="Gygi S.P."/>
        </authorList>
    </citation>
    <scope>PHOSPHORYLATION [LARGE SCALE ANALYSIS] AT SER-1165</scope>
    <scope>IDENTIFICATION BY MASS SPECTROMETRY [LARGE SCALE ANALYSIS]</scope>
    <source>
        <tissue>Cervix carcinoma</tissue>
    </source>
</reference>
<reference key="13">
    <citation type="journal article" date="2013" name="J. Neurosci.">
        <title>Gpr126 functions in Schwann cells to control differentiation and myelination via G-protein activation.</title>
        <authorList>
            <person name="Mogha A."/>
            <person name="Benesh A.E."/>
            <person name="Patra C."/>
            <person name="Engel F.B."/>
            <person name="Schoeneberg T."/>
            <person name="Liebscher I."/>
            <person name="Monk K.R."/>
        </authorList>
    </citation>
    <scope>SUBCELLULAR LOCATION</scope>
    <scope>FUNCTION</scope>
</reference>
<reference key="14">
    <citation type="journal article" date="2014" name="Cell Rep.">
        <title>A tethered agonist within the ectodomain activates the adhesion G protein-coupled receptors GPR126 and GPR133.</title>
        <authorList>
            <person name="Liebscher I."/>
            <person name="Schoen J."/>
            <person name="Petersen S.C."/>
            <person name="Fischer L."/>
            <person name="Auerbach N."/>
            <person name="Demberg L.M."/>
            <person name="Mogha A."/>
            <person name="Coester M."/>
            <person name="Simon K.U."/>
            <person name="Rothemund S."/>
            <person name="Monk K.R."/>
            <person name="Schoeneberg T."/>
        </authorList>
    </citation>
    <scope>STACHEL MOTIF</scope>
    <scope>MUTAGENESIS OF SER-813; GLY-815; ASN-818 AND THR-819</scope>
</reference>
<reference key="15">
    <citation type="journal article" date="2015" name="Am. J. Hum. Genet.">
        <title>Mutations of GPR126 are responsible for severe arthrogryposis multiplex congenita.</title>
        <authorList>
            <person name="Ravenscroft G."/>
            <person name="Nolent F."/>
            <person name="Rajagopalan S."/>
            <person name="Meireles A.M."/>
            <person name="Paavola K.J."/>
            <person name="Gaillard D."/>
            <person name="Alanio E."/>
            <person name="Buckland M."/>
            <person name="Arbuckle S."/>
            <person name="Krivanek M."/>
            <person name="Maluenda J."/>
            <person name="Pannell S."/>
            <person name="Gooding R."/>
            <person name="Ong R.W."/>
            <person name="Allcock R.J."/>
            <person name="Carvalho E.D."/>
            <person name="Carvalho M.D."/>
            <person name="Kok F."/>
            <person name="Talbot W.S."/>
            <person name="Melki J."/>
            <person name="Laing N.G."/>
        </authorList>
    </citation>
    <scope>INVOLVEMENT IN LCCS9</scope>
    <scope>VARIANTS LCCS9 GLU-741 AND GLU-769</scope>
    <scope>CHARACTERIZATION OF VARIANT LCCS9 GLU-741</scope>
</reference>
<reference key="16">
    <citation type="journal article" date="2020" name="Nat. Commun.">
        <title>Structural basis for adhesion G protein-coupled receptor Gpr126 function.</title>
        <authorList>
            <person name="Leon K."/>
            <person name="Cunningham R.L."/>
            <person name="Riback J.A."/>
            <person name="Feldman E."/>
            <person name="Li J."/>
            <person name="Sosnick T.R."/>
            <person name="Zhao M."/>
            <person name="Monk K.R."/>
            <person name="Arac D."/>
        </authorList>
    </citation>
    <scope>SUBCELLULAR LOCATION</scope>
    <scope>MUTAGENESIS OF ARG-468</scope>
</reference>
<reference key="17">
    <citation type="journal article" date="2022" name="Proc. Natl. Acad. Sci. U.S.A.">
        <title>Progesterone activates GPR126 to promote breast cancer development via the Gi pathway.</title>
        <authorList>
            <person name="An W."/>
            <person name="Lin H."/>
            <person name="Ma L."/>
            <person name="Zhang C."/>
            <person name="Zheng Y."/>
            <person name="Cheng Q."/>
            <person name="Ma C."/>
            <person name="Wu X."/>
            <person name="Zhang Z."/>
            <person name="Zhong Y."/>
            <person name="Wang M."/>
            <person name="He D."/>
            <person name="Yang Z."/>
            <person name="Du L."/>
            <person name="Feng S."/>
            <person name="Wang C."/>
            <person name="Yang F."/>
            <person name="Xiao P."/>
            <person name="Zhang P."/>
            <person name="Yu X."/>
            <person name="Sun J.P."/>
        </authorList>
    </citation>
    <scope>FUNCTION</scope>
    <scope>MUTAGENESIS OF PHE-915; LEU-916; LEU-937; LEU-941; LYS-1001; PHE-1012; TRP-1014; TRP-1081; PHE-1085; LEU-1091; PHE-1099 AND ASN-1103</scope>
</reference>
<reference key="18">
    <citation type="journal article" date="2025" name="Cell">
        <title>Identification, structure, and agonist design of an androgen membrane receptor.</title>
        <authorList>
            <person name="Yang Z."/>
            <person name="Ping Y.Q."/>
            <person name="Wang M.W."/>
            <person name="Zhang C."/>
            <person name="Zhou S.H."/>
            <person name="Xi Y.T."/>
            <person name="Zhu K.K."/>
            <person name="Ding W."/>
            <person name="Zhang Q.Y."/>
            <person name="Song Z.C."/>
            <person name="Zhao R.J."/>
            <person name="He Z.L."/>
            <person name="Wang M.X."/>
            <person name="Qi L."/>
            <person name="Ullmann C."/>
            <person name="Ricken A."/>
            <person name="Schoeneberg T."/>
            <person name="Gan Z.J."/>
            <person name="Yu X."/>
            <person name="Xiao P."/>
            <person name="Yi F."/>
            <person name="Liebscher I."/>
            <person name="Sun J.P."/>
        </authorList>
    </citation>
    <scope>FUNCTION</scope>
    <scope>MUTAGENESIS OF PHE-915; LEU-941; TRP-1081; PHE-1099 AND ASN-1103</scope>
</reference>
<reference key="19">
    <citation type="journal article" date="2016" name="PLoS ONE">
        <title>A Putative association of a single nucleotide polymorphism in GPR126 with aggressive periodontitis in a japanese population.</title>
        <authorList>
            <person name="Kitagaki J."/>
            <person name="Miyauchi S."/>
            <person name="Asano Y."/>
            <person name="Imai A."/>
            <person name="Kawai S."/>
            <person name="Michikami I."/>
            <person name="Yamashita M."/>
            <person name="Yamada S."/>
            <person name="Kitamura M."/>
            <person name="Murakami S."/>
        </authorList>
    </citation>
    <scope>VARIANT GLN-1057</scope>
    <scope>CHARACTERIZATION OF VARIANT GLN-1057</scope>
</reference>
<organism>
    <name type="scientific">Homo sapiens</name>
    <name type="common">Human</name>
    <dbReference type="NCBI Taxonomy" id="9606"/>
    <lineage>
        <taxon>Eukaryota</taxon>
        <taxon>Metazoa</taxon>
        <taxon>Chordata</taxon>
        <taxon>Craniata</taxon>
        <taxon>Vertebrata</taxon>
        <taxon>Euteleostomi</taxon>
        <taxon>Mammalia</taxon>
        <taxon>Eutheria</taxon>
        <taxon>Euarchontoglires</taxon>
        <taxon>Primates</taxon>
        <taxon>Haplorrhini</taxon>
        <taxon>Catarrhini</taxon>
        <taxon>Hominidae</taxon>
        <taxon>Homo</taxon>
    </lineage>
</organism>
<comment type="function">
    <text evidence="2 17 18 23 24">Adhesion G-protein coupled receptor (aGPCR) for steroid hormones, such as progesterone and 17alpha-hydroxyprogesterone (17OHP) (PubMed:35394864, PubMed:39884271). Involved in many biological processes, such as myelination, sprouting angiogenesis, placenta, ear and cartilage development (By similarity). Ligand binding causes a conformation change that triggers signaling via guanine nucleotide-binding proteins (G proteins) and modulates the activity of downstream effectors, such as adenylate cyclase (PubMed:24227709, PubMed:35394864). ADGRG6 is coupled to G(i) G alpha proteins and mediates inhibition of adenylate cyclase (PubMed:24227709, PubMed:35394864). Also able to couple to G(q) G proteins (PubMed:24227709). Involved in myelination of the peripheral nervous system: required for differentiation of promyelinating Schwann cells and for normal myelination of axons (PubMed:24227709). Also acts as a regulator of body length and bone mass (PubMed:18391950). Acts as a regulator of blood-brain barrier formation in the central nervous system vie its association with LRP1 and ITGB1 (By similarity).</text>
</comment>
<comment type="activity regulation">
    <text evidence="3">Forms a heterodimer of 2 chains generated by proteolytic processing that remain associated through non-covalent interactions mediated by the GAIN-B domain (By similarity). In the inactivated receptor, the Stachel sequence (also named stalk) is embedded in the GAIN-B domain, where it adopts a beta-strand conformation (By similarity). On activation, the Stachel moves into the 7 transmembrane region and adopts a twisted hook-shaped configuration that forms contacts within the receptor, leading to coupling of a G-alpha protein, which activates signaling (By similarity). The cleaved GAIN-B and N-terminal domains can then dissociate from the rest of the receptor (By similarity).</text>
</comment>
<comment type="subunit">
    <text evidence="2 3">Heterodimer of 2 chains generated by proteolytic processing; the large extracellular N-terminal fragment and the membrane-bound C-terminal fragment predominantly remain associated and non-covalently linked (By similarity). Interacts with Laminin-2; this interaction stabilizes the receptor in an inactive state (By similarity). Laminin-2 polymerization could facilitate ADGRG6-NTF removal, thereby exposing the tethered agonist to drive myelination (By similarity). Interacts with PRNP (By similarity). Interacts with ITGB1 (By similarity). Interacts with LRP1 (By similarity).</text>
</comment>
<comment type="subcellular location">
    <subcellularLocation>
        <location evidence="12 13 18 22">Cell membrane</location>
        <topology evidence="4">Multi-pass membrane protein</topology>
    </subcellularLocation>
    <text evidence="13">Detected on the cell surface of activated but not resting umbilical vein.</text>
</comment>
<comment type="alternative products">
    <event type="alternative splicing"/>
    <isoform>
        <id>Q86SQ4-1</id>
        <name>1</name>
        <sequence type="displayed"/>
    </isoform>
    <isoform>
        <id>Q86SQ4-2</id>
        <name>2</name>
        <sequence type="described" ref="VSP_010747"/>
    </isoform>
    <isoform>
        <id>Q86SQ4-3</id>
        <name>3</name>
        <sequence type="described" ref="VSP_010748"/>
    </isoform>
    <isoform>
        <id>Q86SQ4-4</id>
        <name>4</name>
        <sequence type="described" ref="VSP_010747 VSP_010748"/>
    </isoform>
</comment>
<comment type="tissue specificity">
    <text evidence="13">Expressed in placenta and to a lower extent in pancreas and liver. Detected in aortic endothelial cells but not in skin microvascular endothelial cells.</text>
</comment>
<comment type="induction">
    <text evidence="13">Up-regulated by bacterial lipopolysaccharides (LPS) and thrombin, but not by other inflammatory stimuli in primary umbilical veins.</text>
</comment>
<comment type="domain">
    <text evidence="3 19">The Stachel sequence (also named stalk) in the C-terminal part of the extracellular domain (ECD) functions as a tethered agonist (PubMed:25533341). In the inactivated receptor, the Stachel sequence (also named stalk) is embedded in the GAIN-B domain, where it adopts a beta-strand conformation (By similarity). On activation, the Stachel moves into the 7 transmembrane region and adopts a twisted hook-shaped configuration that forms contacts within the receptor, leading to coupling of a G-alpha protein, which activates signaling (By similarity).</text>
</comment>
<comment type="PTM">
    <text evidence="12 20">Proteolytically cleaved into 2 conserved sites: one in the GPS region of the GAIN-B domain (S1 site) and the other in the middle of the extracellular domain (S2 site) (PubMed:15189448). The proteolytic cleavage at S1 site generates an extracellular subunit and a seven-transmembrane subunit (PubMed:15189448, PubMed:26004201). Furin is involved in the cleavage of the S2 site generating a soluble fragment (PubMed:15189448). Processing at the GPS region occurred independent of and probably prior to the cleavage at the S2 site (PubMed:15189448). Proteolytic cleavage is required for activation of the receptor (PubMed:15189448, PubMed:26004201).</text>
</comment>
<comment type="PTM">
    <text evidence="13">Highly glycosylated.</text>
</comment>
<comment type="polymorphism">
    <text evidence="17">Genetic variations in ADGRG6 influences stature as a quantitative trait (STQTL) [MIM:606255]. Adult height is an easily observable and highly heritable complex continuous trait. Because of this, it is a model trait for studying genetic influence on quantitative traits.</text>
</comment>
<comment type="disease" evidence="20">
    <disease id="DI-04504">
        <name>Lethal congenital contracture syndrome 9</name>
        <acronym>LCCS9</acronym>
        <description>A form of lethal congenital contracture syndrome, an autosomal recessive disorder characterized by degeneration of anterior horn neurons, extreme skeletal muscle atrophy and congenital non-progressive joint contractures. The contractures can involve the upper or lower limbs and/or the vertebral column, leading to various degrees of flexion or extension limitations evident at birth.</description>
        <dbReference type="MIM" id="616503"/>
    </disease>
    <text>The disease is caused by variants affecting the gene represented in this entry.</text>
</comment>
<comment type="similarity">
    <text evidence="32">Belongs to the G-protein coupled receptor 2 family. Adhesion G-protein coupled receptor (ADGR) subfamily.</text>
</comment>
<comment type="sequence caution" evidence="32">
    <conflict type="miscellaneous discrepancy">
        <sequence resource="EMBL-CDS" id="AAO13250"/>
    </conflict>
    <text>Sequencing errors.</text>
</comment>
<comment type="sequence caution" evidence="32">
    <conflict type="erroneous initiation">
        <sequence resource="EMBL-CDS" id="BAB55406"/>
    </conflict>
    <text>Truncated N-terminus.</text>
</comment>
<comment type="sequence caution" evidence="32">
    <conflict type="erroneous initiation">
        <sequence resource="EMBL-CDS" id="BAC11393"/>
    </conflict>
    <text>Truncated N-terminus.</text>
</comment>
<comment type="sequence caution" evidence="32">
    <conflict type="erroneous initiation">
        <sequence resource="EMBL-CDS" id="CAE45930"/>
    </conflict>
    <text>Extended N-terminus.</text>
</comment>
<evidence type="ECO:0000250" key="1">
    <source>
        <dbReference type="UniProtKB" id="C6KFA3"/>
    </source>
</evidence>
<evidence type="ECO:0000250" key="2">
    <source>
        <dbReference type="UniProtKB" id="Q6F3F9"/>
    </source>
</evidence>
<evidence type="ECO:0000250" key="3">
    <source>
        <dbReference type="UniProtKB" id="Q8IZF4"/>
    </source>
</evidence>
<evidence type="ECO:0000255" key="4"/>
<evidence type="ECO:0000255" key="5">
    <source>
        <dbReference type="PROSITE-ProRule" id="PRU00059"/>
    </source>
</evidence>
<evidence type="ECO:0000255" key="6">
    <source>
        <dbReference type="PROSITE-ProRule" id="PRU00098"/>
    </source>
</evidence>
<evidence type="ECO:0000255" key="7">
    <source>
        <dbReference type="PROSITE-ProRule" id="PRU01172"/>
    </source>
</evidence>
<evidence type="ECO:0000256" key="8">
    <source>
        <dbReference type="SAM" id="MobiDB-lite"/>
    </source>
</evidence>
<evidence type="ECO:0000269" key="9">
    <source>
    </source>
</evidence>
<evidence type="ECO:0000269" key="10">
    <source>
    </source>
</evidence>
<evidence type="ECO:0000269" key="11">
    <source>
    </source>
</evidence>
<evidence type="ECO:0000269" key="12">
    <source>
    </source>
</evidence>
<evidence type="ECO:0000269" key="13">
    <source>
    </source>
</evidence>
<evidence type="ECO:0000269" key="14">
    <source>
    </source>
</evidence>
<evidence type="ECO:0000269" key="15">
    <source>
    </source>
</evidence>
<evidence type="ECO:0000269" key="16">
    <source>
    </source>
</evidence>
<evidence type="ECO:0000269" key="17">
    <source>
    </source>
</evidence>
<evidence type="ECO:0000269" key="18">
    <source>
    </source>
</evidence>
<evidence type="ECO:0000269" key="19">
    <source>
    </source>
</evidence>
<evidence type="ECO:0000269" key="20">
    <source>
    </source>
</evidence>
<evidence type="ECO:0000269" key="21">
    <source>
    </source>
</evidence>
<evidence type="ECO:0000269" key="22">
    <source>
    </source>
</evidence>
<evidence type="ECO:0000269" key="23">
    <source>
    </source>
</evidence>
<evidence type="ECO:0000269" key="24">
    <source>
    </source>
</evidence>
<evidence type="ECO:0000269" key="25">
    <source ref="8"/>
</evidence>
<evidence type="ECO:0000303" key="26">
    <source>
    </source>
</evidence>
<evidence type="ECO:0000303" key="27">
    <source>
    </source>
</evidence>
<evidence type="ECO:0000303" key="28">
    <source>
    </source>
</evidence>
<evidence type="ECO:0000303" key="29">
    <source>
    </source>
</evidence>
<evidence type="ECO:0000303" key="30">
    <source>
    </source>
</evidence>
<evidence type="ECO:0000303" key="31">
    <source>
    </source>
</evidence>
<evidence type="ECO:0000305" key="32"/>
<evidence type="ECO:0000305" key="33">
    <source>
    </source>
</evidence>
<evidence type="ECO:0000305" key="34">
    <source>
    </source>
</evidence>
<evidence type="ECO:0000312" key="35">
    <source>
        <dbReference type="HGNC" id="HGNC:13841"/>
    </source>
</evidence>
<evidence type="ECO:0007744" key="36">
    <source>
    </source>
</evidence>